<gene>
    <name evidence="1" type="primary">rplO</name>
    <name type="ordered locus">Cpha266_2404</name>
</gene>
<reference key="1">
    <citation type="submission" date="2006-12" db="EMBL/GenBank/DDBJ databases">
        <title>Complete sequence of Chlorobium phaeobacteroides DSM 266.</title>
        <authorList>
            <consortium name="US DOE Joint Genome Institute"/>
            <person name="Copeland A."/>
            <person name="Lucas S."/>
            <person name="Lapidus A."/>
            <person name="Barry K."/>
            <person name="Detter J.C."/>
            <person name="Glavina del Rio T."/>
            <person name="Hammon N."/>
            <person name="Israni S."/>
            <person name="Pitluck S."/>
            <person name="Goltsman E."/>
            <person name="Schmutz J."/>
            <person name="Larimer F."/>
            <person name="Land M."/>
            <person name="Hauser L."/>
            <person name="Mikhailova N."/>
            <person name="Li T."/>
            <person name="Overmann J."/>
            <person name="Bryant D.A."/>
            <person name="Richardson P."/>
        </authorList>
    </citation>
    <scope>NUCLEOTIDE SEQUENCE [LARGE SCALE GENOMIC DNA]</scope>
    <source>
        <strain>DSM 266 / SMG 266 / 2430</strain>
    </source>
</reference>
<proteinExistence type="inferred from homology"/>
<comment type="function">
    <text evidence="1">Binds to the 23S rRNA.</text>
</comment>
<comment type="subunit">
    <text evidence="1">Part of the 50S ribosomal subunit.</text>
</comment>
<comment type="similarity">
    <text evidence="1">Belongs to the universal ribosomal protein uL15 family.</text>
</comment>
<keyword id="KW-1185">Reference proteome</keyword>
<keyword id="KW-0687">Ribonucleoprotein</keyword>
<keyword id="KW-0689">Ribosomal protein</keyword>
<keyword id="KW-0694">RNA-binding</keyword>
<keyword id="KW-0699">rRNA-binding</keyword>
<accession>A1BJ15</accession>
<sequence length="185" mass="20138">MDLSSLRPAAGAVKNKKRVGRGQGSGNGTTAGKGNKGQQARSGYQKPINEGGQVPVYRRLPKFGFTSLQRKPIKTLNLSQLEDWIQDGLITGEEISVYDLKALCSGSYADYFKILGNGEITTAIKITAHFFSKSAEEKIIKAGGQVIKAYRTLEEASKIRDLSVEEALLKPKAKLVKRVKKSAKP</sequence>
<feature type="chain" id="PRO_1000054446" description="Large ribosomal subunit protein uL15">
    <location>
        <begin position="1"/>
        <end position="185"/>
    </location>
</feature>
<feature type="region of interest" description="Disordered" evidence="2">
    <location>
        <begin position="1"/>
        <end position="51"/>
    </location>
</feature>
<feature type="compositionally biased region" description="Gly residues" evidence="2">
    <location>
        <begin position="21"/>
        <end position="35"/>
    </location>
</feature>
<protein>
    <recommendedName>
        <fullName evidence="1">Large ribosomal subunit protein uL15</fullName>
    </recommendedName>
    <alternativeName>
        <fullName evidence="3">50S ribosomal protein L15</fullName>
    </alternativeName>
</protein>
<organism>
    <name type="scientific">Chlorobium phaeobacteroides (strain DSM 266 / SMG 266 / 2430)</name>
    <dbReference type="NCBI Taxonomy" id="290317"/>
    <lineage>
        <taxon>Bacteria</taxon>
        <taxon>Pseudomonadati</taxon>
        <taxon>Chlorobiota</taxon>
        <taxon>Chlorobiia</taxon>
        <taxon>Chlorobiales</taxon>
        <taxon>Chlorobiaceae</taxon>
        <taxon>Chlorobium/Pelodictyon group</taxon>
        <taxon>Chlorobium</taxon>
    </lineage>
</organism>
<dbReference type="EMBL" id="CP000492">
    <property type="protein sequence ID" value="ABL66392.1"/>
    <property type="molecule type" value="Genomic_DNA"/>
</dbReference>
<dbReference type="RefSeq" id="WP_011746174.1">
    <property type="nucleotide sequence ID" value="NC_008639.1"/>
</dbReference>
<dbReference type="SMR" id="A1BJ15"/>
<dbReference type="STRING" id="290317.Cpha266_2404"/>
<dbReference type="KEGG" id="cph:Cpha266_2404"/>
<dbReference type="eggNOG" id="COG0200">
    <property type="taxonomic scope" value="Bacteria"/>
</dbReference>
<dbReference type="HOGENOM" id="CLU_055188_4_0_10"/>
<dbReference type="OrthoDB" id="9810293at2"/>
<dbReference type="Proteomes" id="UP000008701">
    <property type="component" value="Chromosome"/>
</dbReference>
<dbReference type="GO" id="GO:0022625">
    <property type="term" value="C:cytosolic large ribosomal subunit"/>
    <property type="evidence" value="ECO:0007669"/>
    <property type="project" value="TreeGrafter"/>
</dbReference>
<dbReference type="GO" id="GO:0019843">
    <property type="term" value="F:rRNA binding"/>
    <property type="evidence" value="ECO:0007669"/>
    <property type="project" value="UniProtKB-UniRule"/>
</dbReference>
<dbReference type="GO" id="GO:0003735">
    <property type="term" value="F:structural constituent of ribosome"/>
    <property type="evidence" value="ECO:0007669"/>
    <property type="project" value="InterPro"/>
</dbReference>
<dbReference type="GO" id="GO:0006412">
    <property type="term" value="P:translation"/>
    <property type="evidence" value="ECO:0007669"/>
    <property type="project" value="UniProtKB-UniRule"/>
</dbReference>
<dbReference type="Gene3D" id="3.100.10.10">
    <property type="match status" value="1"/>
</dbReference>
<dbReference type="HAMAP" id="MF_01341">
    <property type="entry name" value="Ribosomal_uL15"/>
    <property type="match status" value="1"/>
</dbReference>
<dbReference type="InterPro" id="IPR030878">
    <property type="entry name" value="Ribosomal_uL15"/>
</dbReference>
<dbReference type="InterPro" id="IPR021131">
    <property type="entry name" value="Ribosomal_uL15/eL18"/>
</dbReference>
<dbReference type="InterPro" id="IPR036227">
    <property type="entry name" value="Ribosomal_uL15/eL18_sf"/>
</dbReference>
<dbReference type="InterPro" id="IPR005749">
    <property type="entry name" value="Ribosomal_uL15_bac-type"/>
</dbReference>
<dbReference type="InterPro" id="IPR001196">
    <property type="entry name" value="Ribosomal_uL15_CS"/>
</dbReference>
<dbReference type="NCBIfam" id="TIGR01071">
    <property type="entry name" value="rplO_bact"/>
    <property type="match status" value="1"/>
</dbReference>
<dbReference type="PANTHER" id="PTHR12934">
    <property type="entry name" value="50S RIBOSOMAL PROTEIN L15"/>
    <property type="match status" value="1"/>
</dbReference>
<dbReference type="PANTHER" id="PTHR12934:SF11">
    <property type="entry name" value="LARGE RIBOSOMAL SUBUNIT PROTEIN UL15M"/>
    <property type="match status" value="1"/>
</dbReference>
<dbReference type="Pfam" id="PF00828">
    <property type="entry name" value="Ribosomal_L27A"/>
    <property type="match status" value="1"/>
</dbReference>
<dbReference type="SUPFAM" id="SSF52080">
    <property type="entry name" value="Ribosomal proteins L15p and L18e"/>
    <property type="match status" value="1"/>
</dbReference>
<dbReference type="PROSITE" id="PS00475">
    <property type="entry name" value="RIBOSOMAL_L15"/>
    <property type="match status" value="1"/>
</dbReference>
<evidence type="ECO:0000255" key="1">
    <source>
        <dbReference type="HAMAP-Rule" id="MF_01341"/>
    </source>
</evidence>
<evidence type="ECO:0000256" key="2">
    <source>
        <dbReference type="SAM" id="MobiDB-lite"/>
    </source>
</evidence>
<evidence type="ECO:0000305" key="3"/>
<name>RL15_CHLPD</name>